<evidence type="ECO:0000255" key="1">
    <source>
        <dbReference type="HAMAP-Rule" id="MF_00121"/>
    </source>
</evidence>
<dbReference type="EC" id="6.3.5.-" evidence="1"/>
<dbReference type="EMBL" id="CP000572">
    <property type="protein sequence ID" value="ABN91136.1"/>
    <property type="molecule type" value="Genomic_DNA"/>
</dbReference>
<dbReference type="RefSeq" id="WP_004523090.1">
    <property type="nucleotide sequence ID" value="NC_009076.1"/>
</dbReference>
<dbReference type="SMR" id="A3NQ46"/>
<dbReference type="GeneID" id="93058697"/>
<dbReference type="KEGG" id="bpl:BURPS1106A_0184"/>
<dbReference type="HOGENOM" id="CLU_019240_0_0_4"/>
<dbReference type="Proteomes" id="UP000006738">
    <property type="component" value="Chromosome I"/>
</dbReference>
<dbReference type="GO" id="GO:0050566">
    <property type="term" value="F:asparaginyl-tRNA synthase (glutamine-hydrolyzing) activity"/>
    <property type="evidence" value="ECO:0007669"/>
    <property type="project" value="RHEA"/>
</dbReference>
<dbReference type="GO" id="GO:0005524">
    <property type="term" value="F:ATP binding"/>
    <property type="evidence" value="ECO:0007669"/>
    <property type="project" value="UniProtKB-KW"/>
</dbReference>
<dbReference type="GO" id="GO:0050567">
    <property type="term" value="F:glutaminyl-tRNA synthase (glutamine-hydrolyzing) activity"/>
    <property type="evidence" value="ECO:0007669"/>
    <property type="project" value="UniProtKB-UniRule"/>
</dbReference>
<dbReference type="GO" id="GO:0070681">
    <property type="term" value="P:glutaminyl-tRNAGln biosynthesis via transamidation"/>
    <property type="evidence" value="ECO:0007669"/>
    <property type="project" value="TreeGrafter"/>
</dbReference>
<dbReference type="GO" id="GO:0006412">
    <property type="term" value="P:translation"/>
    <property type="evidence" value="ECO:0007669"/>
    <property type="project" value="UniProtKB-UniRule"/>
</dbReference>
<dbReference type="FunFam" id="1.10.10.410:FF:000001">
    <property type="entry name" value="Aspartyl/glutamyl-tRNA(Asn/Gln) amidotransferase subunit B"/>
    <property type="match status" value="1"/>
</dbReference>
<dbReference type="FunFam" id="1.10.150.380:FF:000001">
    <property type="entry name" value="Aspartyl/glutamyl-tRNA(Asn/Gln) amidotransferase subunit B"/>
    <property type="match status" value="1"/>
</dbReference>
<dbReference type="Gene3D" id="1.10.10.410">
    <property type="match status" value="1"/>
</dbReference>
<dbReference type="Gene3D" id="1.10.150.380">
    <property type="entry name" value="GatB domain, N-terminal subdomain"/>
    <property type="match status" value="1"/>
</dbReference>
<dbReference type="HAMAP" id="MF_00121">
    <property type="entry name" value="GatB"/>
    <property type="match status" value="1"/>
</dbReference>
<dbReference type="InterPro" id="IPR017959">
    <property type="entry name" value="Asn/Gln-tRNA_amidoTrfase_suB/E"/>
</dbReference>
<dbReference type="InterPro" id="IPR006075">
    <property type="entry name" value="Asn/Gln-tRNA_Trfase_suB/E_cat"/>
</dbReference>
<dbReference type="InterPro" id="IPR018027">
    <property type="entry name" value="Asn/Gln_amidotransferase"/>
</dbReference>
<dbReference type="InterPro" id="IPR003789">
    <property type="entry name" value="Asn/Gln_tRNA_amidoTrase-B-like"/>
</dbReference>
<dbReference type="InterPro" id="IPR004413">
    <property type="entry name" value="GatB"/>
</dbReference>
<dbReference type="InterPro" id="IPR042114">
    <property type="entry name" value="GatB_C_1"/>
</dbReference>
<dbReference type="InterPro" id="IPR023168">
    <property type="entry name" value="GatB_Yqey_C_2"/>
</dbReference>
<dbReference type="InterPro" id="IPR017958">
    <property type="entry name" value="Gln-tRNA_amidoTrfase_suB_CS"/>
</dbReference>
<dbReference type="InterPro" id="IPR014746">
    <property type="entry name" value="Gln_synth/guanido_kin_cat_dom"/>
</dbReference>
<dbReference type="NCBIfam" id="TIGR00133">
    <property type="entry name" value="gatB"/>
    <property type="match status" value="1"/>
</dbReference>
<dbReference type="NCBIfam" id="NF004012">
    <property type="entry name" value="PRK05477.1-2"/>
    <property type="match status" value="1"/>
</dbReference>
<dbReference type="NCBIfam" id="NF004014">
    <property type="entry name" value="PRK05477.1-4"/>
    <property type="match status" value="1"/>
</dbReference>
<dbReference type="NCBIfam" id="NF004015">
    <property type="entry name" value="PRK05477.1-5"/>
    <property type="match status" value="1"/>
</dbReference>
<dbReference type="PANTHER" id="PTHR11659">
    <property type="entry name" value="GLUTAMYL-TRNA GLN AMIDOTRANSFERASE SUBUNIT B MITOCHONDRIAL AND PROKARYOTIC PET112-RELATED"/>
    <property type="match status" value="1"/>
</dbReference>
<dbReference type="PANTHER" id="PTHR11659:SF0">
    <property type="entry name" value="GLUTAMYL-TRNA(GLN) AMIDOTRANSFERASE SUBUNIT B, MITOCHONDRIAL"/>
    <property type="match status" value="1"/>
</dbReference>
<dbReference type="Pfam" id="PF02934">
    <property type="entry name" value="GatB_N"/>
    <property type="match status" value="1"/>
</dbReference>
<dbReference type="Pfam" id="PF02637">
    <property type="entry name" value="GatB_Yqey"/>
    <property type="match status" value="1"/>
</dbReference>
<dbReference type="SMART" id="SM00845">
    <property type="entry name" value="GatB_Yqey"/>
    <property type="match status" value="1"/>
</dbReference>
<dbReference type="SUPFAM" id="SSF89095">
    <property type="entry name" value="GatB/YqeY motif"/>
    <property type="match status" value="1"/>
</dbReference>
<dbReference type="SUPFAM" id="SSF55931">
    <property type="entry name" value="Glutamine synthetase/guanido kinase"/>
    <property type="match status" value="1"/>
</dbReference>
<dbReference type="PROSITE" id="PS01234">
    <property type="entry name" value="GATB"/>
    <property type="match status" value="1"/>
</dbReference>
<sequence length="490" mass="53323">MTQWEVVIGLETHAQLSTVSKIFSGASTQFGAQPNTQACPVDLALPGVLPVLNRGAVERAIRFGLAIGATVAPRSVFARKNYFYPDLPKGYQISQYEIPVVQGGQITIQVPANEKAGKQAYSKTVNLTRAHLEEDAGKSLHEDFAGMTGIDLNRAGTPLLEIVTEPEMRSAAEAVAYAKALHGLVMWLGICDGNMQEGSFRCDANVSVRPVGQEKFGTRAEIKNLNSFRFLEDAINYEVRRQIELIEDGGEVVQETRLYDPDKRETRSMRSKEDAHDYRYFPDPDLMPLVIGADWIARVKGEMPELPAAMQQRFVEQYGVSAYDAGVLTSTKAMAEYFEALVAKAGAANAKLAANWLMGDVSSQLNRDGIDIDACPVSAAQLALVLQRIADGTISNKIAKEIFVTIWDEKAADEGAADRIIEAKGLKQISDTGALEAIIDEVLAANAKSVEEFRAGKDKAFNALVGQAMKATKGKANPQQVNELLKKKLG</sequence>
<reference key="1">
    <citation type="journal article" date="2010" name="Genome Biol. Evol.">
        <title>Continuing evolution of Burkholderia mallei through genome reduction and large-scale rearrangements.</title>
        <authorList>
            <person name="Losada L."/>
            <person name="Ronning C.M."/>
            <person name="DeShazer D."/>
            <person name="Woods D."/>
            <person name="Fedorova N."/>
            <person name="Kim H.S."/>
            <person name="Shabalina S.A."/>
            <person name="Pearson T.R."/>
            <person name="Brinkac L."/>
            <person name="Tan P."/>
            <person name="Nandi T."/>
            <person name="Crabtree J."/>
            <person name="Badger J."/>
            <person name="Beckstrom-Sternberg S."/>
            <person name="Saqib M."/>
            <person name="Schutzer S.E."/>
            <person name="Keim P."/>
            <person name="Nierman W.C."/>
        </authorList>
    </citation>
    <scope>NUCLEOTIDE SEQUENCE [LARGE SCALE GENOMIC DNA]</scope>
    <source>
        <strain>1106a</strain>
    </source>
</reference>
<gene>
    <name evidence="1" type="primary">gatB</name>
    <name type="ordered locus">BURPS1106A_0184</name>
</gene>
<keyword id="KW-0067">ATP-binding</keyword>
<keyword id="KW-0436">Ligase</keyword>
<keyword id="KW-0547">Nucleotide-binding</keyword>
<keyword id="KW-0648">Protein biosynthesis</keyword>
<name>GATB_BURP0</name>
<comment type="function">
    <text evidence="1">Allows the formation of correctly charged Asn-tRNA(Asn) or Gln-tRNA(Gln) through the transamidation of misacylated Asp-tRNA(Asn) or Glu-tRNA(Gln) in organisms which lack either or both of asparaginyl-tRNA or glutaminyl-tRNA synthetases. The reaction takes place in the presence of glutamine and ATP through an activated phospho-Asp-tRNA(Asn) or phospho-Glu-tRNA(Gln).</text>
</comment>
<comment type="catalytic activity">
    <reaction evidence="1">
        <text>L-glutamyl-tRNA(Gln) + L-glutamine + ATP + H2O = L-glutaminyl-tRNA(Gln) + L-glutamate + ADP + phosphate + H(+)</text>
        <dbReference type="Rhea" id="RHEA:17521"/>
        <dbReference type="Rhea" id="RHEA-COMP:9681"/>
        <dbReference type="Rhea" id="RHEA-COMP:9684"/>
        <dbReference type="ChEBI" id="CHEBI:15377"/>
        <dbReference type="ChEBI" id="CHEBI:15378"/>
        <dbReference type="ChEBI" id="CHEBI:29985"/>
        <dbReference type="ChEBI" id="CHEBI:30616"/>
        <dbReference type="ChEBI" id="CHEBI:43474"/>
        <dbReference type="ChEBI" id="CHEBI:58359"/>
        <dbReference type="ChEBI" id="CHEBI:78520"/>
        <dbReference type="ChEBI" id="CHEBI:78521"/>
        <dbReference type="ChEBI" id="CHEBI:456216"/>
    </reaction>
</comment>
<comment type="catalytic activity">
    <reaction evidence="1">
        <text>L-aspartyl-tRNA(Asn) + L-glutamine + ATP + H2O = L-asparaginyl-tRNA(Asn) + L-glutamate + ADP + phosphate + 2 H(+)</text>
        <dbReference type="Rhea" id="RHEA:14513"/>
        <dbReference type="Rhea" id="RHEA-COMP:9674"/>
        <dbReference type="Rhea" id="RHEA-COMP:9677"/>
        <dbReference type="ChEBI" id="CHEBI:15377"/>
        <dbReference type="ChEBI" id="CHEBI:15378"/>
        <dbReference type="ChEBI" id="CHEBI:29985"/>
        <dbReference type="ChEBI" id="CHEBI:30616"/>
        <dbReference type="ChEBI" id="CHEBI:43474"/>
        <dbReference type="ChEBI" id="CHEBI:58359"/>
        <dbReference type="ChEBI" id="CHEBI:78515"/>
        <dbReference type="ChEBI" id="CHEBI:78516"/>
        <dbReference type="ChEBI" id="CHEBI:456216"/>
    </reaction>
</comment>
<comment type="subunit">
    <text evidence="1">Heterotrimer of A, B and C subunits.</text>
</comment>
<comment type="similarity">
    <text evidence="1">Belongs to the GatB/GatE family. GatB subfamily.</text>
</comment>
<organism>
    <name type="scientific">Burkholderia pseudomallei (strain 1106a)</name>
    <dbReference type="NCBI Taxonomy" id="357348"/>
    <lineage>
        <taxon>Bacteria</taxon>
        <taxon>Pseudomonadati</taxon>
        <taxon>Pseudomonadota</taxon>
        <taxon>Betaproteobacteria</taxon>
        <taxon>Burkholderiales</taxon>
        <taxon>Burkholderiaceae</taxon>
        <taxon>Burkholderia</taxon>
        <taxon>pseudomallei group</taxon>
    </lineage>
</organism>
<proteinExistence type="inferred from homology"/>
<feature type="chain" id="PRO_1000015946" description="Aspartyl/glutamyl-tRNA(Asn/Gln) amidotransferase subunit B">
    <location>
        <begin position="1"/>
        <end position="490"/>
    </location>
</feature>
<accession>A3NQ46</accession>
<protein>
    <recommendedName>
        <fullName evidence="1">Aspartyl/glutamyl-tRNA(Asn/Gln) amidotransferase subunit B</fullName>
        <shortName evidence="1">Asp/Glu-ADT subunit B</shortName>
        <ecNumber evidence="1">6.3.5.-</ecNumber>
    </recommendedName>
</protein>